<evidence type="ECO:0000250" key="1">
    <source>
        <dbReference type="UniProtKB" id="P04776"/>
    </source>
</evidence>
<evidence type="ECO:0000255" key="2"/>
<evidence type="ECO:0000255" key="3">
    <source>
        <dbReference type="RuleBase" id="RU003681"/>
    </source>
</evidence>
<evidence type="ECO:0000256" key="4">
    <source>
        <dbReference type="SAM" id="MobiDB-lite"/>
    </source>
</evidence>
<evidence type="ECO:0000269" key="5">
    <source>
    </source>
</evidence>
<evidence type="ECO:0000303" key="6">
    <source>
    </source>
</evidence>
<evidence type="ECO:0000305" key="7"/>
<evidence type="ECO:0000305" key="8">
    <source>
    </source>
</evidence>
<evidence type="ECO:0000312" key="9">
    <source>
        <dbReference type="EMBL" id="APR62629.1"/>
    </source>
</evidence>
<protein>
    <recommendedName>
        <fullName evidence="6">11S globulin</fullName>
    </recommendedName>
    <alternativeName>
        <fullName evidence="6 9">11S legumin</fullName>
    </alternativeName>
    <allergenName evidence="6">Jug n 4</allergenName>
    <component>
        <recommendedName>
            <fullName evidence="6">11S globulin acidic chain</fullName>
        </recommendedName>
    </component>
    <component>
        <recommendedName>
            <fullName evidence="6">11S globulin basic chain</fullName>
        </recommendedName>
    </component>
</protein>
<feature type="signal peptide" evidence="5">
    <location>
        <begin position="1"/>
        <end position="23"/>
    </location>
</feature>
<feature type="chain" id="PRO_0000445789" description="11S globulin acidic chain" evidence="8">
    <location>
        <begin position="24"/>
        <end position="318"/>
    </location>
</feature>
<feature type="chain" id="PRO_0000445790" description="11S globulin basic chain" evidence="8">
    <location>
        <begin position="319"/>
        <end position="510"/>
    </location>
</feature>
<feature type="domain" description="Cupin type-1 1" evidence="2">
    <location>
        <begin position="38"/>
        <end position="257"/>
    </location>
</feature>
<feature type="domain" description="Cupin type-1 2" evidence="2">
    <location>
        <begin position="331"/>
        <end position="480"/>
    </location>
</feature>
<feature type="region of interest" description="Disordered" evidence="4">
    <location>
        <begin position="194"/>
        <end position="239"/>
    </location>
</feature>
<feature type="region of interest" description="Disordered" evidence="4">
    <location>
        <begin position="284"/>
        <end position="319"/>
    </location>
</feature>
<feature type="region of interest" description="Disordered" evidence="4">
    <location>
        <begin position="487"/>
        <end position="510"/>
    </location>
</feature>
<feature type="short sequence motif" description="NGXEET; peptidase recognition motif" evidence="8">
    <location>
        <begin position="318"/>
        <end position="323"/>
    </location>
</feature>
<feature type="compositionally biased region" description="Basic and acidic residues" evidence="4">
    <location>
        <begin position="284"/>
        <end position="318"/>
    </location>
</feature>
<feature type="disulfide bond" evidence="1">
    <location>
        <begin position="35"/>
        <end position="68"/>
    </location>
</feature>
<feature type="disulfide bond" description="Interchain (between acidic and basic chains)" evidence="1">
    <location>
        <begin position="111"/>
        <end position="325"/>
    </location>
</feature>
<name>JUGN4_JUGNI</name>
<reference evidence="9" key="1">
    <citation type="journal article" date="2017" name="J. Agric. Food Chem.">
        <title>Purification and Characterization of a Black Walnut (Juglans nigra) Allergen, Jug n 4.</title>
        <authorList>
            <person name="Zhang Y.Z."/>
            <person name="Du W.X."/>
            <person name="Fan Y."/>
            <person name="Yi J."/>
            <person name="Lyu S.C."/>
            <person name="Nadeau K.C."/>
            <person name="Thomas A.L."/>
            <person name="McHugh T."/>
        </authorList>
    </citation>
    <scope>NUCLEOTIDE SEQUENCE [GENOMIC DNA]</scope>
    <scope>PARTIAL PROTEIN SEQUENCE</scope>
    <scope>SUBUNIT</scope>
    <scope>TISSUE SPECIFICITY</scope>
    <scope>DEVELOPMENTAL STAGE</scope>
    <scope>PTM</scope>
    <scope>ALLERGEN</scope>
    <scope>MOTIF</scope>
    <scope>CIRCULAR DICHROISM ANALYSIS</scope>
    <source>
        <strain evidence="6">cv. Sparrow</strain>
        <tissue evidence="6">Endosperm</tissue>
    </source>
</reference>
<accession>A0A1L6K371</accession>
<dbReference type="EMBL" id="KX891230">
    <property type="protein sequence ID" value="APR62629.1"/>
    <property type="molecule type" value="Genomic_DNA"/>
</dbReference>
<dbReference type="SMR" id="A0A1L6K371"/>
<dbReference type="Allergome" id="11992">
    <property type="allergen name" value="Jug n 4"/>
</dbReference>
<dbReference type="Allergome" id="11993">
    <property type="allergen name" value="Jug n 4.0101"/>
</dbReference>
<dbReference type="GO" id="GO:0043245">
    <property type="term" value="C:extraorganismal space"/>
    <property type="evidence" value="ECO:0000314"/>
    <property type="project" value="UniProtKB"/>
</dbReference>
<dbReference type="GO" id="GO:0019863">
    <property type="term" value="F:IgE binding"/>
    <property type="evidence" value="ECO:0000314"/>
    <property type="project" value="UniProtKB"/>
</dbReference>
<dbReference type="GO" id="GO:0045735">
    <property type="term" value="F:nutrient reservoir activity"/>
    <property type="evidence" value="ECO:0000314"/>
    <property type="project" value="UniProtKB"/>
</dbReference>
<dbReference type="GO" id="GO:0010431">
    <property type="term" value="P:seed maturation"/>
    <property type="evidence" value="ECO:0000270"/>
    <property type="project" value="UniProtKB"/>
</dbReference>
<dbReference type="CDD" id="cd02243">
    <property type="entry name" value="cupin_11S_legumin_C"/>
    <property type="match status" value="1"/>
</dbReference>
<dbReference type="CDD" id="cd02242">
    <property type="entry name" value="cupin_11S_legumin_N"/>
    <property type="match status" value="1"/>
</dbReference>
<dbReference type="FunFam" id="2.60.120.10:FF:000073">
    <property type="entry name" value="Glycinin G1"/>
    <property type="match status" value="1"/>
</dbReference>
<dbReference type="FunFam" id="2.60.120.10:FF:000124">
    <property type="entry name" value="Glycinin G5"/>
    <property type="match status" value="1"/>
</dbReference>
<dbReference type="Gene3D" id="2.60.120.10">
    <property type="entry name" value="Jelly Rolls"/>
    <property type="match status" value="2"/>
</dbReference>
<dbReference type="InterPro" id="IPR022379">
    <property type="entry name" value="11S_seedstore_CS"/>
</dbReference>
<dbReference type="InterPro" id="IPR006044">
    <property type="entry name" value="11S_seedstore_pln"/>
</dbReference>
<dbReference type="InterPro" id="IPR006045">
    <property type="entry name" value="Cupin_1"/>
</dbReference>
<dbReference type="InterPro" id="IPR014710">
    <property type="entry name" value="RmlC-like_jellyroll"/>
</dbReference>
<dbReference type="InterPro" id="IPR011051">
    <property type="entry name" value="RmlC_Cupin_sf"/>
</dbReference>
<dbReference type="InterPro" id="IPR050253">
    <property type="entry name" value="Seed_Storage-Functional"/>
</dbReference>
<dbReference type="PANTHER" id="PTHR31189:SF35">
    <property type="entry name" value="12S SEED STORAGE PROTEIN CRB"/>
    <property type="match status" value="1"/>
</dbReference>
<dbReference type="PANTHER" id="PTHR31189">
    <property type="entry name" value="OS03G0336100 PROTEIN-RELATED"/>
    <property type="match status" value="1"/>
</dbReference>
<dbReference type="Pfam" id="PF00190">
    <property type="entry name" value="Cupin_1"/>
    <property type="match status" value="2"/>
</dbReference>
<dbReference type="PRINTS" id="PR00439">
    <property type="entry name" value="11SGLOBULIN"/>
</dbReference>
<dbReference type="SMART" id="SM00835">
    <property type="entry name" value="Cupin_1"/>
    <property type="match status" value="2"/>
</dbReference>
<dbReference type="SUPFAM" id="SSF51182">
    <property type="entry name" value="RmlC-like cupins"/>
    <property type="match status" value="1"/>
</dbReference>
<dbReference type="PROSITE" id="PS00305">
    <property type="entry name" value="11S_SEED_STORAGE"/>
    <property type="match status" value="1"/>
</dbReference>
<keyword id="KW-0020">Allergen</keyword>
<keyword id="KW-0903">Direct protein sequencing</keyword>
<keyword id="KW-1015">Disulfide bond</keyword>
<keyword id="KW-0708">Seed storage protein</keyword>
<keyword id="KW-0732">Signal</keyword>
<keyword id="KW-0758">Storage protein</keyword>
<proteinExistence type="evidence at protein level"/>
<organism evidence="9">
    <name type="scientific">Juglans nigra</name>
    <name type="common">Black walnut</name>
    <name type="synonym">Wallia nigra</name>
    <dbReference type="NCBI Taxonomy" id="16719"/>
    <lineage>
        <taxon>Eukaryota</taxon>
        <taxon>Viridiplantae</taxon>
        <taxon>Streptophyta</taxon>
        <taxon>Embryophyta</taxon>
        <taxon>Tracheophyta</taxon>
        <taxon>Spermatophyta</taxon>
        <taxon>Magnoliopsida</taxon>
        <taxon>eudicotyledons</taxon>
        <taxon>Gunneridae</taxon>
        <taxon>Pentapetalae</taxon>
        <taxon>rosids</taxon>
        <taxon>fabids</taxon>
        <taxon>Fagales</taxon>
        <taxon>Juglandaceae</taxon>
        <taxon>Juglans</taxon>
    </lineage>
</organism>
<sequence length="510" mass="58056">MAKPILLSISLCLVALVNGCLAQSGGRQQPRFGECKLKRLVALEPSNRIEAEAGVIESWDPNNQQFQCAGVAVVRRTIEPNGLLLPQYSNAPQLLYIVKGRGITGVLFPGCPETFEESQQGQSRIRPSLRSASFQRDRHQKIRHFREGDVIAFPAGVAHWCYNDGDTPVVAVALMDTTNNANQLDQNPRNFYLAGNPDDEFRPQGQQEYEQHRRQQQHQQRHGEPGQQQRGSGNNVFSGFDADFLADAFNVDTETARRLQSENDHRRSIVRVEGRQLQVIRPRWSREEQEREERKERERERESESERRQSRRGGRDDNGLEETICTLRLRENIGDPSRADIYTEEAGRISTANSHTLPVLRWLQLSAERGALYSDALYVPHWNLNAHSVVYALRGRAEVQVVDNFGQTVFDDELREGQLLTIPQNFAVVKRARNEGFEWVSFKTNENAMVSPLAGRTSAIRALPEEVLANALQIPREDARRLKFNRQESTLVRSRPSSSRSSRSERRAEV</sequence>
<comment type="function">
    <text evidence="3 8">Seed storage protein.</text>
</comment>
<comment type="subunit">
    <text evidence="5">Homohexamer. Can assemble in other multimeric configurations.</text>
</comment>
<comment type="tissue specificity">
    <text evidence="5">Expressed in endosperm of the seed.</text>
</comment>
<comment type="developmental stage">
    <text evidence="5">Expressed during seed development.</text>
</comment>
<comment type="PTM">
    <text evidence="5">Proteolytically processed from a single precursor to produce an acidic and a basic chain that are linked by a disulfide bond.</text>
</comment>
<comment type="allergen">
    <text evidence="5">Causes an allergic reaction in human. Binds to IgE.</text>
</comment>
<comment type="similarity">
    <text evidence="3 7">Belongs to the 11S seed storage protein (globulins) family.</text>
</comment>